<proteinExistence type="inferred from homology"/>
<evidence type="ECO:0000255" key="1">
    <source>
        <dbReference type="HAMAP-Rule" id="MF_01380"/>
    </source>
</evidence>
<gene>
    <name evidence="1" type="primary">erpA</name>
    <name type="ordered locus">lpl1339</name>
</gene>
<keyword id="KW-0408">Iron</keyword>
<keyword id="KW-0411">Iron-sulfur</keyword>
<keyword id="KW-0479">Metal-binding</keyword>
<sequence length="130" mass="14096">MASVDVSQNTSDINFSVSAADKVAELIKEEDNSDLNLRVSITGGGCSGFQYGFSFDEQINDDDTVIIQQCSDGKSSVKLLIDSMSYQYLHDAEIDYIKGIQGEQFVIRNPNAKTTCGCGSSFSIGDEDDL</sequence>
<protein>
    <recommendedName>
        <fullName evidence="1">Iron-sulfur cluster insertion protein ErpA</fullName>
    </recommendedName>
</protein>
<organism>
    <name type="scientific">Legionella pneumophila (strain Lens)</name>
    <dbReference type="NCBI Taxonomy" id="297245"/>
    <lineage>
        <taxon>Bacteria</taxon>
        <taxon>Pseudomonadati</taxon>
        <taxon>Pseudomonadota</taxon>
        <taxon>Gammaproteobacteria</taxon>
        <taxon>Legionellales</taxon>
        <taxon>Legionellaceae</taxon>
        <taxon>Legionella</taxon>
    </lineage>
</organism>
<comment type="function">
    <text evidence="1">Required for insertion of 4Fe-4S clusters for at least IspG.</text>
</comment>
<comment type="cofactor">
    <cofactor evidence="1">
        <name>iron-sulfur cluster</name>
        <dbReference type="ChEBI" id="CHEBI:30408"/>
    </cofactor>
    <text evidence="1">Binds 1 iron-sulfur cluster per subunit.</text>
</comment>
<comment type="subunit">
    <text evidence="1">Homodimer.</text>
</comment>
<comment type="similarity">
    <text evidence="1">Belongs to the HesB/IscA family.</text>
</comment>
<name>ERPA_LEGPL</name>
<reference key="1">
    <citation type="journal article" date="2004" name="Nat. Genet.">
        <title>Evidence in the Legionella pneumophila genome for exploitation of host cell functions and high genome plasticity.</title>
        <authorList>
            <person name="Cazalet C."/>
            <person name="Rusniok C."/>
            <person name="Brueggemann H."/>
            <person name="Zidane N."/>
            <person name="Magnier A."/>
            <person name="Ma L."/>
            <person name="Tichit M."/>
            <person name="Jarraud S."/>
            <person name="Bouchier C."/>
            <person name="Vandenesch F."/>
            <person name="Kunst F."/>
            <person name="Etienne J."/>
            <person name="Glaser P."/>
            <person name="Buchrieser C."/>
        </authorList>
    </citation>
    <scope>NUCLEOTIDE SEQUENCE [LARGE SCALE GENOMIC DNA]</scope>
    <source>
        <strain>Lens</strain>
    </source>
</reference>
<feature type="chain" id="PRO_0000311498" description="Iron-sulfur cluster insertion protein ErpA">
    <location>
        <begin position="1"/>
        <end position="130"/>
    </location>
</feature>
<feature type="binding site" evidence="1">
    <location>
        <position position="46"/>
    </location>
    <ligand>
        <name>iron-sulfur cluster</name>
        <dbReference type="ChEBI" id="CHEBI:30408"/>
    </ligand>
</feature>
<feature type="binding site" evidence="1">
    <location>
        <position position="116"/>
    </location>
    <ligand>
        <name>iron-sulfur cluster</name>
        <dbReference type="ChEBI" id="CHEBI:30408"/>
    </ligand>
</feature>
<feature type="binding site" evidence="1">
    <location>
        <position position="118"/>
    </location>
    <ligand>
        <name>iron-sulfur cluster</name>
        <dbReference type="ChEBI" id="CHEBI:30408"/>
    </ligand>
</feature>
<accession>Q5WWW0</accession>
<dbReference type="EMBL" id="CR628337">
    <property type="protein sequence ID" value="CAH15579.1"/>
    <property type="molecule type" value="Genomic_DNA"/>
</dbReference>
<dbReference type="RefSeq" id="WP_011215407.1">
    <property type="nucleotide sequence ID" value="NC_006369.1"/>
</dbReference>
<dbReference type="SMR" id="Q5WWW0"/>
<dbReference type="KEGG" id="lpf:lpl1339"/>
<dbReference type="LegioList" id="lpl1339"/>
<dbReference type="HOGENOM" id="CLU_069054_5_3_6"/>
<dbReference type="Proteomes" id="UP000002517">
    <property type="component" value="Chromosome"/>
</dbReference>
<dbReference type="GO" id="GO:0051537">
    <property type="term" value="F:2 iron, 2 sulfur cluster binding"/>
    <property type="evidence" value="ECO:0007669"/>
    <property type="project" value="TreeGrafter"/>
</dbReference>
<dbReference type="GO" id="GO:0051539">
    <property type="term" value="F:4 iron, 4 sulfur cluster binding"/>
    <property type="evidence" value="ECO:0007669"/>
    <property type="project" value="TreeGrafter"/>
</dbReference>
<dbReference type="GO" id="GO:0005506">
    <property type="term" value="F:iron ion binding"/>
    <property type="evidence" value="ECO:0007669"/>
    <property type="project" value="UniProtKB-UniRule"/>
</dbReference>
<dbReference type="GO" id="GO:0016226">
    <property type="term" value="P:iron-sulfur cluster assembly"/>
    <property type="evidence" value="ECO:0007669"/>
    <property type="project" value="UniProtKB-UniRule"/>
</dbReference>
<dbReference type="FunFam" id="2.60.300.12:FF:000002">
    <property type="entry name" value="Iron-sulfur cluster insertion protein ErpA"/>
    <property type="match status" value="1"/>
</dbReference>
<dbReference type="Gene3D" id="2.60.300.12">
    <property type="entry name" value="HesB-like domain"/>
    <property type="match status" value="1"/>
</dbReference>
<dbReference type="HAMAP" id="MF_01380">
    <property type="entry name" value="Fe_S_insert_ErpA"/>
    <property type="match status" value="1"/>
</dbReference>
<dbReference type="InterPro" id="IPR000361">
    <property type="entry name" value="FeS_biogenesis"/>
</dbReference>
<dbReference type="InterPro" id="IPR016092">
    <property type="entry name" value="FeS_cluster_insertion"/>
</dbReference>
<dbReference type="InterPro" id="IPR017870">
    <property type="entry name" value="FeS_cluster_insertion_CS"/>
</dbReference>
<dbReference type="InterPro" id="IPR023063">
    <property type="entry name" value="FeS_cluster_insertion_RrpA"/>
</dbReference>
<dbReference type="InterPro" id="IPR035903">
    <property type="entry name" value="HesB-like_dom_sf"/>
</dbReference>
<dbReference type="NCBIfam" id="TIGR00049">
    <property type="entry name" value="iron-sulfur cluster assembly accessory protein"/>
    <property type="match status" value="1"/>
</dbReference>
<dbReference type="NCBIfam" id="NF010147">
    <property type="entry name" value="PRK13623.1"/>
    <property type="match status" value="1"/>
</dbReference>
<dbReference type="PANTHER" id="PTHR43011">
    <property type="entry name" value="IRON-SULFUR CLUSTER ASSEMBLY 2 HOMOLOG, MITOCHONDRIAL"/>
    <property type="match status" value="1"/>
</dbReference>
<dbReference type="PANTHER" id="PTHR43011:SF1">
    <property type="entry name" value="IRON-SULFUR CLUSTER ASSEMBLY 2 HOMOLOG, MITOCHONDRIAL"/>
    <property type="match status" value="1"/>
</dbReference>
<dbReference type="Pfam" id="PF01521">
    <property type="entry name" value="Fe-S_biosyn"/>
    <property type="match status" value="1"/>
</dbReference>
<dbReference type="SUPFAM" id="SSF89360">
    <property type="entry name" value="HesB-like domain"/>
    <property type="match status" value="1"/>
</dbReference>
<dbReference type="PROSITE" id="PS01152">
    <property type="entry name" value="HESB"/>
    <property type="match status" value="1"/>
</dbReference>